<reference key="1">
    <citation type="journal article" date="1998" name="Proc. Natl. Acad. Sci. U.S.A.">
        <title>Complete mitochondrial genome suggests diapsid affinities of turtles.</title>
        <authorList>
            <person name="Zardoya R."/>
            <person name="Meyer A."/>
        </authorList>
    </citation>
    <scope>NUCLEOTIDE SEQUENCE [GENOMIC DNA]</scope>
</reference>
<name>ATP6_PELSU</name>
<accession>O79675</accession>
<proteinExistence type="inferred from homology"/>
<geneLocation type="mitochondrion"/>
<keyword id="KW-0066">ATP synthesis</keyword>
<keyword id="KW-0138">CF(0)</keyword>
<keyword id="KW-0375">Hydrogen ion transport</keyword>
<keyword id="KW-0406">Ion transport</keyword>
<keyword id="KW-0472">Membrane</keyword>
<keyword id="KW-0496">Mitochondrion</keyword>
<keyword id="KW-0999">Mitochondrion inner membrane</keyword>
<keyword id="KW-0812">Transmembrane</keyword>
<keyword id="KW-1133">Transmembrane helix</keyword>
<keyword id="KW-0813">Transport</keyword>
<dbReference type="EMBL" id="AF039066">
    <property type="protein sequence ID" value="AAD05055.1"/>
    <property type="molecule type" value="Genomic_DNA"/>
</dbReference>
<dbReference type="PIR" id="T11106">
    <property type="entry name" value="T11106"/>
</dbReference>
<dbReference type="RefSeq" id="NP_008437.1">
    <property type="nucleotide sequence ID" value="NC_001947.1"/>
</dbReference>
<dbReference type="SMR" id="O79675"/>
<dbReference type="GeneID" id="808286"/>
<dbReference type="CTD" id="4508"/>
<dbReference type="GO" id="GO:0005743">
    <property type="term" value="C:mitochondrial inner membrane"/>
    <property type="evidence" value="ECO:0007669"/>
    <property type="project" value="UniProtKB-SubCell"/>
</dbReference>
<dbReference type="GO" id="GO:0045259">
    <property type="term" value="C:proton-transporting ATP synthase complex"/>
    <property type="evidence" value="ECO:0000250"/>
    <property type="project" value="UniProtKB"/>
</dbReference>
<dbReference type="GO" id="GO:0015252">
    <property type="term" value="F:proton channel activity"/>
    <property type="evidence" value="ECO:0000250"/>
    <property type="project" value="UniProtKB"/>
</dbReference>
<dbReference type="GO" id="GO:0046933">
    <property type="term" value="F:proton-transporting ATP synthase activity, rotational mechanism"/>
    <property type="evidence" value="ECO:0007669"/>
    <property type="project" value="TreeGrafter"/>
</dbReference>
<dbReference type="GO" id="GO:0015986">
    <property type="term" value="P:proton motive force-driven ATP synthesis"/>
    <property type="evidence" value="ECO:0000250"/>
    <property type="project" value="UniProtKB"/>
</dbReference>
<dbReference type="GO" id="GO:1902600">
    <property type="term" value="P:proton transmembrane transport"/>
    <property type="evidence" value="ECO:0000250"/>
    <property type="project" value="UniProtKB"/>
</dbReference>
<dbReference type="CDD" id="cd00310">
    <property type="entry name" value="ATP-synt_Fo_a_6"/>
    <property type="match status" value="1"/>
</dbReference>
<dbReference type="Gene3D" id="1.20.120.220">
    <property type="entry name" value="ATP synthase, F0 complex, subunit A"/>
    <property type="match status" value="1"/>
</dbReference>
<dbReference type="InterPro" id="IPR000568">
    <property type="entry name" value="ATP_synth_F0_asu"/>
</dbReference>
<dbReference type="InterPro" id="IPR045083">
    <property type="entry name" value="ATP_synth_F0_asu_bact/mt"/>
</dbReference>
<dbReference type="InterPro" id="IPR035908">
    <property type="entry name" value="F0_ATP_A_sf"/>
</dbReference>
<dbReference type="NCBIfam" id="TIGR01131">
    <property type="entry name" value="ATP_synt_6_or_A"/>
    <property type="match status" value="1"/>
</dbReference>
<dbReference type="PANTHER" id="PTHR11410">
    <property type="entry name" value="ATP SYNTHASE SUBUNIT A"/>
    <property type="match status" value="1"/>
</dbReference>
<dbReference type="PANTHER" id="PTHR11410:SF0">
    <property type="entry name" value="ATP SYNTHASE SUBUNIT A"/>
    <property type="match status" value="1"/>
</dbReference>
<dbReference type="Pfam" id="PF00119">
    <property type="entry name" value="ATP-synt_A"/>
    <property type="match status" value="1"/>
</dbReference>
<dbReference type="PRINTS" id="PR00123">
    <property type="entry name" value="ATPASEA"/>
</dbReference>
<dbReference type="SUPFAM" id="SSF81336">
    <property type="entry name" value="F1F0 ATP synthase subunit A"/>
    <property type="match status" value="1"/>
</dbReference>
<organism>
    <name type="scientific">Pelomedusa subrufa</name>
    <name type="common">African side-necked turtle</name>
    <dbReference type="NCBI Taxonomy" id="44522"/>
    <lineage>
        <taxon>Eukaryota</taxon>
        <taxon>Metazoa</taxon>
        <taxon>Chordata</taxon>
        <taxon>Craniata</taxon>
        <taxon>Vertebrata</taxon>
        <taxon>Euteleostomi</taxon>
        <taxon>Archelosauria</taxon>
        <taxon>Testudinata</taxon>
        <taxon>Testudines</taxon>
        <taxon>Pleurodira</taxon>
        <taxon>Pelomedusidae</taxon>
        <taxon>Pelomedusa</taxon>
    </lineage>
</organism>
<protein>
    <recommendedName>
        <fullName evidence="1">ATP synthase F(0) complex subunit a</fullName>
    </recommendedName>
    <alternativeName>
        <fullName>F-ATPase protein 6</fullName>
    </alternativeName>
    <alternativeName>
        <fullName evidence="1">Proton-conducting channel, ATP synthase F(0) complex subunit a</fullName>
    </alternativeName>
</protein>
<sequence>MNLTLFDQFSSPNILAIPLMTISLLMLTIIFPMKHNRLLTNRLLSIQSKMIHIFTKQLMLPIPKSGHHWALILTSLMTLLLTSNLLGLLPYTFTPTTQLSMNLGFALPMWLATLLIGLRNQPTMSLAHLLPEGTPTPLIPTLILIESISLMIRPLALGVRISANLTAGHLLMQLTSSATLSLSSMPTLSFMTAILLFLLTILEMAVAMIQALVFVLLLSLYLQENTHN</sequence>
<gene>
    <name evidence="1" type="primary">MT-ATP6</name>
    <name type="synonym">ATP6</name>
    <name type="synonym">ATPASE6</name>
    <name type="synonym">MTATP6</name>
</gene>
<comment type="function">
    <text evidence="1">Subunit a, of the mitochondrial membrane ATP synthase complex (F(1)F(0) ATP synthase or Complex V) that produces ATP from ADP in the presence of a proton gradient across the membrane which is generated by electron transport complexes of the respiratory chain. ATP synthase complex consist of a soluble F(1) head domain - the catalytic core - and a membrane F(1) domain - the membrane proton channel. These two domains are linked by a central stalk rotating inside the F(1) region and a stationary peripheral stalk. During catalysis, ATP synthesis in the catalytic domain of F(1) is coupled via a rotary mechanism of the central stalk subunits to proton translocation. With the subunit c (ATP5MC1), forms the proton-conducting channel in the F(0) domain, that contains two crucial half-channels (inlet and outlet) that facilitate proton movement from the mitochondrial intermembrane space (IMS) into the matrix. Protons are taken up via the inlet half-channel and released through the outlet half-channel, following a Grotthuss mechanism.</text>
</comment>
<comment type="catalytic activity">
    <reaction evidence="1">
        <text>H(+)(in) = H(+)(out)</text>
        <dbReference type="Rhea" id="RHEA:34979"/>
        <dbReference type="ChEBI" id="CHEBI:15378"/>
    </reaction>
</comment>
<comment type="subunit">
    <text evidence="1">Component of the ATP synthase complex composed at least of ATP5F1A/subunit alpha, ATP5F1B/subunit beta, ATP5MC1/subunit c (homooctomer), MT-ATP6/subunit a, MT-ATP8/subunit 8, ATP5ME/subunit e, ATP5MF/subunit f, ATP5MG/subunit g, ATP5MK/subunit k, ATP5MJ/subunit j, ATP5F1C/subunit gamma, ATP5F1D/subunit delta, ATP5F1E/subunit epsilon, ATP5PF/subunit F6, ATP5PB/subunit b, ATP5PD/subunit d, ATP5PO/subunit OSCP. ATP synthase complex consists of a soluble F(1) head domain (subunits alpha(3) and beta(3)) - the catalytic core - and a membrane F(0) domain - the membrane proton channel (subunits c, a, 8, e, f, g, k and j). These two domains are linked by a central stalk (subunits gamma, delta, and epsilon) rotating inside the F1 region and a stationary peripheral stalk (subunits F6, b, d, and OSCP). Interacts with DNAJC30; interaction is direct.</text>
</comment>
<comment type="subcellular location">
    <subcellularLocation>
        <location>Mitochondrion inner membrane</location>
        <topology>Multi-pass membrane protein</topology>
    </subcellularLocation>
</comment>
<comment type="similarity">
    <text evidence="3">Belongs to the ATPase A chain family.</text>
</comment>
<evidence type="ECO:0000250" key="1">
    <source>
        <dbReference type="UniProtKB" id="P00846"/>
    </source>
</evidence>
<evidence type="ECO:0000255" key="2"/>
<evidence type="ECO:0000305" key="3"/>
<feature type="chain" id="PRO_0000082151" description="ATP synthase F(0) complex subunit a">
    <location>
        <begin position="1"/>
        <end position="228"/>
    </location>
</feature>
<feature type="transmembrane region" description="Helical" evidence="2">
    <location>
        <begin position="13"/>
        <end position="33"/>
    </location>
</feature>
<feature type="transmembrane region" description="Helical" evidence="2">
    <location>
        <begin position="69"/>
        <end position="89"/>
    </location>
</feature>
<feature type="transmembrane region" description="Helical" evidence="2">
    <location>
        <begin position="98"/>
        <end position="118"/>
    </location>
</feature>
<feature type="transmembrane region" description="Helical" evidence="2">
    <location>
        <begin position="139"/>
        <end position="159"/>
    </location>
</feature>
<feature type="transmembrane region" description="Helical" evidence="2">
    <location>
        <begin position="194"/>
        <end position="214"/>
    </location>
</feature>